<keyword id="KW-0903">Direct protein sequencing</keyword>
<keyword id="KW-0472">Membrane</keyword>
<keyword id="KW-0602">Photosynthesis</keyword>
<keyword id="KW-0603">Photosystem I</keyword>
<keyword id="KW-1185">Reference proteome</keyword>
<keyword id="KW-0732">Signal</keyword>
<keyword id="KW-0793">Thylakoid</keyword>
<keyword id="KW-0812">Transmembrane</keyword>
<keyword id="KW-1133">Transmembrane helix</keyword>
<feature type="signal peptide" evidence="4">
    <location>
        <begin position="1"/>
        <end position="23"/>
    </location>
</feature>
<feature type="chain" id="PRO_0000029351" description="Photosystem I reaction center subunit III">
    <location>
        <begin position="24"/>
        <end position="183"/>
    </location>
</feature>
<feature type="transmembrane region" description="Helical" evidence="2">
    <location>
        <begin position="102"/>
        <end position="122"/>
    </location>
</feature>
<feature type="region of interest" description="Disordered" evidence="3">
    <location>
        <begin position="164"/>
        <end position="183"/>
    </location>
</feature>
<feature type="compositionally biased region" description="Basic and acidic residues" evidence="3">
    <location>
        <begin position="166"/>
        <end position="176"/>
    </location>
</feature>
<accession>Q9X7I4</accession>
<organism>
    <name type="scientific">Prochlorococcus marinus (strain SARG / CCMP1375 / SS120)</name>
    <dbReference type="NCBI Taxonomy" id="167539"/>
    <lineage>
        <taxon>Bacteria</taxon>
        <taxon>Bacillati</taxon>
        <taxon>Cyanobacteriota</taxon>
        <taxon>Cyanophyceae</taxon>
        <taxon>Synechococcales</taxon>
        <taxon>Prochlorococcaceae</taxon>
        <taxon>Prochlorococcus</taxon>
    </lineage>
</organism>
<dbReference type="EMBL" id="AJ131438">
    <property type="protein sequence ID" value="CAB41403.1"/>
    <property type="molecule type" value="Genomic_DNA"/>
</dbReference>
<dbReference type="EMBL" id="AE017126">
    <property type="protein sequence ID" value="AAP99512.1"/>
    <property type="molecule type" value="Genomic_DNA"/>
</dbReference>
<dbReference type="RefSeq" id="NP_874860.1">
    <property type="nucleotide sequence ID" value="NC_005042.1"/>
</dbReference>
<dbReference type="RefSeq" id="WP_011124622.1">
    <property type="nucleotide sequence ID" value="NC_005042.1"/>
</dbReference>
<dbReference type="SMR" id="Q9X7I4"/>
<dbReference type="STRING" id="167539.Pro_0467"/>
<dbReference type="EnsemblBacteria" id="AAP99512">
    <property type="protein sequence ID" value="AAP99512"/>
    <property type="gene ID" value="Pro_0467"/>
</dbReference>
<dbReference type="KEGG" id="pma:Pro_0467"/>
<dbReference type="PATRIC" id="fig|167539.5.peg.480"/>
<dbReference type="eggNOG" id="ENOG5033VYX">
    <property type="taxonomic scope" value="Bacteria"/>
</dbReference>
<dbReference type="HOGENOM" id="CLU_098828_1_0_3"/>
<dbReference type="OrthoDB" id="512859at2"/>
<dbReference type="Proteomes" id="UP000001420">
    <property type="component" value="Chromosome"/>
</dbReference>
<dbReference type="GO" id="GO:0009538">
    <property type="term" value="C:photosystem I reaction center"/>
    <property type="evidence" value="ECO:0007669"/>
    <property type="project" value="InterPro"/>
</dbReference>
<dbReference type="GO" id="GO:0031676">
    <property type="term" value="C:plasma membrane-derived thylakoid membrane"/>
    <property type="evidence" value="ECO:0007669"/>
    <property type="project" value="UniProtKB-SubCell"/>
</dbReference>
<dbReference type="GO" id="GO:0015979">
    <property type="term" value="P:photosynthesis"/>
    <property type="evidence" value="ECO:0007669"/>
    <property type="project" value="UniProtKB-KW"/>
</dbReference>
<dbReference type="Gene3D" id="1.10.8.110">
    <property type="entry name" value="Photosystem I PsaF, reaction centre subunit III"/>
    <property type="match status" value="1"/>
</dbReference>
<dbReference type="InterPro" id="IPR003666">
    <property type="entry name" value="PSI_PsaF"/>
</dbReference>
<dbReference type="InterPro" id="IPR036577">
    <property type="entry name" value="PSI_PsaF_sf"/>
</dbReference>
<dbReference type="PANTHER" id="PTHR34939">
    <property type="entry name" value="PHOTOSYSTEM I REACTION CENTER SUBUNIT III, CHLOROPLASTIC"/>
    <property type="match status" value="1"/>
</dbReference>
<dbReference type="PANTHER" id="PTHR34939:SF1">
    <property type="entry name" value="PHOTOSYSTEM I REACTION CENTER SUBUNIT III, CHLOROPLASTIC"/>
    <property type="match status" value="1"/>
</dbReference>
<dbReference type="Pfam" id="PF02507">
    <property type="entry name" value="PSI_PsaF"/>
    <property type="match status" value="1"/>
</dbReference>
<dbReference type="SUPFAM" id="SSF81536">
    <property type="entry name" value="Subunit III of photosystem I reaction centre, PsaF"/>
    <property type="match status" value="1"/>
</dbReference>
<comment type="function">
    <text>Probably participates in efficiency of electron transfer from plastocyanin to P700 (or cytochrome c553 in algae and cyanobacteria). This plastocyanin-docking protein contributes to the specific association of plastocyanin to PSI.</text>
</comment>
<comment type="subcellular location">
    <subcellularLocation>
        <location evidence="1">Cellular thylakoid membrane</location>
        <topology evidence="1">Single-pass membrane protein</topology>
    </subcellularLocation>
</comment>
<comment type="similarity">
    <text evidence="5">Belongs to the PsaF family.</text>
</comment>
<proteinExistence type="evidence at protein level"/>
<protein>
    <recommendedName>
        <fullName>Photosystem I reaction center subunit III</fullName>
    </recommendedName>
    <alternativeName>
        <fullName>PSI-F</fullName>
    </alternativeName>
</protein>
<name>PSAF_PROMA</name>
<gene>
    <name type="primary">psaF</name>
    <name type="ordered locus">Pro_0467</name>
</gene>
<evidence type="ECO:0000250" key="1"/>
<evidence type="ECO:0000255" key="2"/>
<evidence type="ECO:0000256" key="3">
    <source>
        <dbReference type="SAM" id="MobiDB-lite"/>
    </source>
</evidence>
<evidence type="ECO:0000269" key="4">
    <source ref="1"/>
</evidence>
<evidence type="ECO:0000305" key="5"/>
<reference key="1">
    <citation type="online journal article" date="1999" name="Plant Gene Register">
        <title>The 21 kDa protein associated with photosystem I in Prochlorococcus marinus is the PsaF protein.</title>
        <authorList>
            <person name="van der Staay G.W.M."/>
            <person name="Partensky F."/>
        </authorList>
        <locator>PGR99-067</locator>
    </citation>
    <scope>NUCLEOTIDE SEQUENCE [GENOMIC DNA]</scope>
    <scope>PROTEIN SEQUENCE OF 24-38 AND 134-148</scope>
    <source>
        <strain>SARG / CCMP1375 / SS120</strain>
    </source>
</reference>
<reference key="2">
    <citation type="journal article" date="2003" name="Proc. Natl. Acad. Sci. U.S.A.">
        <title>Genome sequence of the cyanobacterium Prochlorococcus marinus SS120, a nearly minimal oxyphototrophic genome.</title>
        <authorList>
            <person name="Dufresne A."/>
            <person name="Salanoubat M."/>
            <person name="Partensky F."/>
            <person name="Artiguenave F."/>
            <person name="Axmann I.M."/>
            <person name="Barbe V."/>
            <person name="Duprat S."/>
            <person name="Galperin M.Y."/>
            <person name="Koonin E.V."/>
            <person name="Le Gall F."/>
            <person name="Makarova K.S."/>
            <person name="Ostrowski M."/>
            <person name="Oztas S."/>
            <person name="Robert C."/>
            <person name="Rogozin I.B."/>
            <person name="Scanlan D.J."/>
            <person name="Tandeau de Marsac N."/>
            <person name="Weissenbach J."/>
            <person name="Wincker P."/>
            <person name="Wolf Y.I."/>
            <person name="Hess W.R."/>
        </authorList>
    </citation>
    <scope>NUCLEOTIDE SEQUENCE [LARGE SCALE GENOMIC DNA]</scope>
    <source>
        <strain>SARG / CCMP1375 / SS120</strain>
    </source>
</reference>
<sequence length="183" mass="19930">MRRLFSILLSAFLLLGLAPIVNAAGEAVNADRAATDFTASALTTCSENTRFNERASQATTPKDIARFERYSKASCGDDGLPHLVIAATIEPWGALANRHHEGDILIPGHIFIYVAGIIGWSGREYLRASKKTKNPAENEIIIDFALARQCLIKGAAWPVEANKQGRSGDLREKDENISLNGPR</sequence>